<keyword id="KW-0071">Autoinducer synthesis</keyword>
<keyword id="KW-0673">Quorum sensing</keyword>
<keyword id="KW-0949">S-adenosyl-L-methionine</keyword>
<keyword id="KW-0808">Transferase</keyword>
<name>AHYI_AERHY</name>
<dbReference type="EC" id="2.3.1.184"/>
<dbReference type="EMBL" id="X89469">
    <property type="protein sequence ID" value="CAA61653.1"/>
    <property type="molecule type" value="Genomic_DNA"/>
</dbReference>
<dbReference type="RefSeq" id="WP_043125540.1">
    <property type="nucleotide sequence ID" value="NZ_OY731279.1"/>
</dbReference>
<dbReference type="SMR" id="Q44058"/>
<dbReference type="eggNOG" id="COG3916">
    <property type="taxonomic scope" value="Bacteria"/>
</dbReference>
<dbReference type="BRENDA" id="2.3.1.184">
    <property type="organism ID" value="164"/>
</dbReference>
<dbReference type="GO" id="GO:0061579">
    <property type="term" value="F:N-acyl homoserine lactone synthase activity"/>
    <property type="evidence" value="ECO:0007669"/>
    <property type="project" value="UniProtKB-EC"/>
</dbReference>
<dbReference type="GO" id="GO:0009372">
    <property type="term" value="P:quorum sensing"/>
    <property type="evidence" value="ECO:0007669"/>
    <property type="project" value="UniProtKB-KW"/>
</dbReference>
<dbReference type="GO" id="GO:0007165">
    <property type="term" value="P:signal transduction"/>
    <property type="evidence" value="ECO:0007669"/>
    <property type="project" value="TreeGrafter"/>
</dbReference>
<dbReference type="Gene3D" id="3.40.630.30">
    <property type="match status" value="1"/>
</dbReference>
<dbReference type="InterPro" id="IPR016181">
    <property type="entry name" value="Acyl_CoA_acyltransferase"/>
</dbReference>
<dbReference type="InterPro" id="IPR018311">
    <property type="entry name" value="Autoind_synth_CS"/>
</dbReference>
<dbReference type="InterPro" id="IPR001690">
    <property type="entry name" value="Autoind_synthase"/>
</dbReference>
<dbReference type="PANTHER" id="PTHR39322">
    <property type="entry name" value="ACYL-HOMOSERINE-LACTONE SYNTHASE"/>
    <property type="match status" value="1"/>
</dbReference>
<dbReference type="PANTHER" id="PTHR39322:SF1">
    <property type="entry name" value="ISOVALERYL-HOMOSERINE LACTONE SYNTHASE"/>
    <property type="match status" value="1"/>
</dbReference>
<dbReference type="Pfam" id="PF00765">
    <property type="entry name" value="Autoind_synth"/>
    <property type="match status" value="1"/>
</dbReference>
<dbReference type="PRINTS" id="PR01549">
    <property type="entry name" value="AUTOINDCRSYN"/>
</dbReference>
<dbReference type="SUPFAM" id="SSF55729">
    <property type="entry name" value="Acyl-CoA N-acyltransferases (Nat)"/>
    <property type="match status" value="1"/>
</dbReference>
<dbReference type="PROSITE" id="PS00949">
    <property type="entry name" value="AUTOINDUCER_SYNTH_1"/>
    <property type="match status" value="1"/>
</dbReference>
<dbReference type="PROSITE" id="PS51187">
    <property type="entry name" value="AUTOINDUCER_SYNTH_2"/>
    <property type="match status" value="1"/>
</dbReference>
<evidence type="ECO:0000255" key="1">
    <source>
        <dbReference type="PROSITE-ProRule" id="PRU00533"/>
    </source>
</evidence>
<sequence>MLVFKGKLKEHPRWEVENELYRFRNRVFSDRLGWDVESHRGLEQDSFDTPDTHWVLIEDEEGLCGCIRLLSCAKDYMLPSIFPTALAGEAPPRSNDVWELTRLAIDAERAPRLGNGISELTCIIFREVYAFAKAQGIRELVAVVSLPVERIFRRLGLPIERLGHRQAVDLGAVRGVGIRFHLDERFARAVGQPLQGAYDEARELVTE</sequence>
<protein>
    <recommendedName>
        <fullName>Acyl-homoserine-lactone synthase</fullName>
        <ecNumber>2.3.1.184</ecNumber>
    </recommendedName>
    <alternativeName>
        <fullName>Autoinducer synthesis protein AhyI</fullName>
    </alternativeName>
</protein>
<gene>
    <name type="primary">ahyI</name>
</gene>
<accession>Q44058</accession>
<comment type="function">
    <text>Required for the synthesis of N-butanoyl-L-homoserine lactone (BHL), an autoinducer molecule which binds to AhyR.</text>
</comment>
<comment type="catalytic activity">
    <reaction>
        <text>a fatty acyl-[ACP] + S-adenosyl-L-methionine = an N-acyl-L-homoserine lactone + S-methyl-5'-thioadenosine + holo-[ACP] + H(+)</text>
        <dbReference type="Rhea" id="RHEA:10096"/>
        <dbReference type="Rhea" id="RHEA-COMP:9685"/>
        <dbReference type="Rhea" id="RHEA-COMP:14125"/>
        <dbReference type="ChEBI" id="CHEBI:15378"/>
        <dbReference type="ChEBI" id="CHEBI:17509"/>
        <dbReference type="ChEBI" id="CHEBI:55474"/>
        <dbReference type="ChEBI" id="CHEBI:59789"/>
        <dbReference type="ChEBI" id="CHEBI:64479"/>
        <dbReference type="ChEBI" id="CHEBI:138651"/>
        <dbReference type="EC" id="2.3.1.184"/>
    </reaction>
</comment>
<comment type="similarity">
    <text evidence="1">Belongs to the autoinducer synthase family.</text>
</comment>
<organism>
    <name type="scientific">Aeromonas hydrophila</name>
    <dbReference type="NCBI Taxonomy" id="644"/>
    <lineage>
        <taxon>Bacteria</taxon>
        <taxon>Pseudomonadati</taxon>
        <taxon>Pseudomonadota</taxon>
        <taxon>Gammaproteobacteria</taxon>
        <taxon>Aeromonadales</taxon>
        <taxon>Aeromonadaceae</taxon>
        <taxon>Aeromonas</taxon>
    </lineage>
</organism>
<reference key="1">
    <citation type="journal article" date="1997" name="J. Bacteriol.">
        <title>Quorum sensing in Aeromonas hydrophila and Aeromonas salmonicida: identification of the LuxRI homologs AhyRI and AsaRI and their cognate N-acylhomoserine lactone signal molecules.</title>
        <authorList>
            <person name="Swift S."/>
            <person name="Karlyshev A.V."/>
            <person name="Fish L."/>
            <person name="Durant E.L."/>
            <person name="Winson M.K."/>
            <person name="Chhabra S.R."/>
            <person name="Williams P."/>
            <person name="Macintyre S."/>
            <person name="Stewart G.S.A.B."/>
        </authorList>
    </citation>
    <scope>NUCLEOTIDE SEQUENCE [GENOMIC DNA]</scope>
    <source>
        <strain>A1</strain>
    </source>
</reference>
<proteinExistence type="inferred from homology"/>
<feature type="chain" id="PRO_0000210879" description="Acyl-homoserine-lactone synthase">
    <location>
        <begin position="1"/>
        <end position="207"/>
    </location>
</feature>